<feature type="initiator methionine" description="Removed" evidence="13">
    <location>
        <position position="1"/>
    </location>
</feature>
<feature type="chain" id="PRO_0000389477" description="Probable serine/threonine-protein kinase PBL3">
    <location>
        <begin position="2"/>
        <end position="426"/>
    </location>
</feature>
<feature type="domain" description="Protein kinase" evidence="3">
    <location>
        <begin position="83"/>
        <end position="366"/>
    </location>
</feature>
<feature type="region of interest" description="Disordered" evidence="4">
    <location>
        <begin position="1"/>
        <end position="42"/>
    </location>
</feature>
<feature type="region of interest" description="Disordered" evidence="4">
    <location>
        <begin position="367"/>
        <end position="426"/>
    </location>
</feature>
<feature type="compositionally biased region" description="Low complexity" evidence="4">
    <location>
        <begin position="7"/>
        <end position="42"/>
    </location>
</feature>
<feature type="compositionally biased region" description="Polar residues" evidence="4">
    <location>
        <begin position="367"/>
        <end position="394"/>
    </location>
</feature>
<feature type="active site" description="Proton acceptor" evidence="3">
    <location>
        <position position="216"/>
    </location>
</feature>
<feature type="binding site" evidence="3">
    <location>
        <begin position="89"/>
        <end position="97"/>
    </location>
    <ligand>
        <name>ATP</name>
        <dbReference type="ChEBI" id="CHEBI:30616"/>
    </ligand>
</feature>
<feature type="binding site" evidence="3">
    <location>
        <position position="121"/>
    </location>
    <ligand>
        <name>ATP</name>
        <dbReference type="ChEBI" id="CHEBI:30616"/>
    </ligand>
</feature>
<feature type="modified residue" description="Phosphothreonine" evidence="1">
    <location>
        <position position="72"/>
    </location>
</feature>
<feature type="modified residue" description="Phosphotyrosine" evidence="1">
    <location>
        <position position="166"/>
    </location>
</feature>
<feature type="modified residue" description="Phosphoserine" evidence="1">
    <location>
        <position position="250"/>
    </location>
</feature>
<feature type="modified residue" description="Phosphothreonine" evidence="1">
    <location>
        <position position="251"/>
    </location>
</feature>
<feature type="modified residue" description="Phosphothreonine" evidence="1">
    <location>
        <position position="256"/>
    </location>
</feature>
<feature type="modified residue" description="Phosphotyrosine" evidence="1">
    <location>
        <position position="264"/>
    </location>
</feature>
<feature type="lipid moiety-binding region" description="N-myristoyl glycine" evidence="13">
    <location>
        <position position="2"/>
    </location>
</feature>
<feature type="lipid moiety-binding region" description="S-palmitoyl cysteine" evidence="2">
    <location>
        <position position="4"/>
    </location>
</feature>
<feature type="mutagenesis site" description="Drastic reduction of plasma membrane localization and strong increase of nuclear localization." evidence="5">
    <original>G</original>
    <variation>A</variation>
    <location>
        <position position="2"/>
    </location>
</feature>
<feature type="sequence conflict" description="In Ref. 4; BAC42058." evidence="12" ref="4">
    <original>K</original>
    <variation>R</variation>
    <location>
        <position position="295"/>
    </location>
</feature>
<protein>
    <recommendedName>
        <fullName evidence="12">Probable serine/threonine-protein kinase PBL3</fullName>
        <ecNumber evidence="12">2.7.11.1</ecNumber>
    </recommendedName>
    <alternativeName>
        <fullName evidence="8">PBS1-like protein 3</fullName>
    </alternativeName>
    <alternativeName>
        <fullName evidence="12">Protein kinase 2B</fullName>
    </alternativeName>
</protein>
<reference key="1">
    <citation type="journal article" date="1997" name="Plant Cell Physiol.">
        <title>A serine/threonine protein kinase gene isolated by an in vivo binding procedure using the Arabidopsis floral homeotic gene product, AGAMOUS.</title>
        <authorList>
            <person name="Ito T."/>
            <person name="Takahashi N."/>
            <person name="Shimura Y."/>
            <person name="Okada K."/>
        </authorList>
    </citation>
    <scope>NUCLEOTIDE SEQUENCE [MRNA]</scope>
    <scope>TISSUE SPECIFICITY</scope>
    <source>
        <strain>cv. Landsberg erecta</strain>
    </source>
</reference>
<reference key="2">
    <citation type="journal article" date="1999" name="Nature">
        <title>Sequence and analysis of chromosome 2 of the plant Arabidopsis thaliana.</title>
        <authorList>
            <person name="Lin X."/>
            <person name="Kaul S."/>
            <person name="Rounsley S.D."/>
            <person name="Shea T.P."/>
            <person name="Benito M.-I."/>
            <person name="Town C.D."/>
            <person name="Fujii C.Y."/>
            <person name="Mason T.M."/>
            <person name="Bowman C.L."/>
            <person name="Barnstead M.E."/>
            <person name="Feldblyum T.V."/>
            <person name="Buell C.R."/>
            <person name="Ketchum K.A."/>
            <person name="Lee J.J."/>
            <person name="Ronning C.M."/>
            <person name="Koo H.L."/>
            <person name="Moffat K.S."/>
            <person name="Cronin L.A."/>
            <person name="Shen M."/>
            <person name="Pai G."/>
            <person name="Van Aken S."/>
            <person name="Umayam L."/>
            <person name="Tallon L.J."/>
            <person name="Gill J.E."/>
            <person name="Adams M.D."/>
            <person name="Carrera A.J."/>
            <person name="Creasy T.H."/>
            <person name="Goodman H.M."/>
            <person name="Somerville C.R."/>
            <person name="Copenhaver G.P."/>
            <person name="Preuss D."/>
            <person name="Nierman W.C."/>
            <person name="White O."/>
            <person name="Eisen J.A."/>
            <person name="Salzberg S.L."/>
            <person name="Fraser C.M."/>
            <person name="Venter J.C."/>
        </authorList>
    </citation>
    <scope>NUCLEOTIDE SEQUENCE [LARGE SCALE GENOMIC DNA]</scope>
    <source>
        <strain>cv. Columbia</strain>
    </source>
</reference>
<reference key="3">
    <citation type="journal article" date="2017" name="Plant J.">
        <title>Araport11: a complete reannotation of the Arabidopsis thaliana reference genome.</title>
        <authorList>
            <person name="Cheng C.Y."/>
            <person name="Krishnakumar V."/>
            <person name="Chan A.P."/>
            <person name="Thibaud-Nissen F."/>
            <person name="Schobel S."/>
            <person name="Town C.D."/>
        </authorList>
    </citation>
    <scope>GENOME REANNOTATION</scope>
    <source>
        <strain>cv. Columbia</strain>
    </source>
</reference>
<reference key="4">
    <citation type="journal article" date="2002" name="Science">
        <title>Functional annotation of a full-length Arabidopsis cDNA collection.</title>
        <authorList>
            <person name="Seki M."/>
            <person name="Narusaka M."/>
            <person name="Kamiya A."/>
            <person name="Ishida J."/>
            <person name="Satou M."/>
            <person name="Sakurai T."/>
            <person name="Nakajima M."/>
            <person name="Enju A."/>
            <person name="Akiyama K."/>
            <person name="Oono Y."/>
            <person name="Muramatsu M."/>
            <person name="Hayashizaki Y."/>
            <person name="Kawai J."/>
            <person name="Carninci P."/>
            <person name="Itoh M."/>
            <person name="Ishii Y."/>
            <person name="Arakawa T."/>
            <person name="Shibata K."/>
            <person name="Shinagawa A."/>
            <person name="Shinozaki K."/>
        </authorList>
    </citation>
    <scope>NUCLEOTIDE SEQUENCE [LARGE SCALE MRNA]</scope>
    <source>
        <strain>cv. Columbia</strain>
    </source>
</reference>
<reference key="5">
    <citation type="journal article" date="2003" name="Science">
        <title>Empirical analysis of transcriptional activity in the Arabidopsis genome.</title>
        <authorList>
            <person name="Yamada K."/>
            <person name="Lim J."/>
            <person name="Dale J.M."/>
            <person name="Chen H."/>
            <person name="Shinn P."/>
            <person name="Palm C.J."/>
            <person name="Southwick A.M."/>
            <person name="Wu H.C."/>
            <person name="Kim C.J."/>
            <person name="Nguyen M."/>
            <person name="Pham P.K."/>
            <person name="Cheuk R.F."/>
            <person name="Karlin-Newmann G."/>
            <person name="Liu S.X."/>
            <person name="Lam B."/>
            <person name="Sakano H."/>
            <person name="Wu T."/>
            <person name="Yu G."/>
            <person name="Miranda M."/>
            <person name="Quach H.L."/>
            <person name="Tripp M."/>
            <person name="Chang C.H."/>
            <person name="Lee J.M."/>
            <person name="Toriumi M.J."/>
            <person name="Chan M.M."/>
            <person name="Tang C.C."/>
            <person name="Onodera C.S."/>
            <person name="Deng J.M."/>
            <person name="Akiyama K."/>
            <person name="Ansari Y."/>
            <person name="Arakawa T."/>
            <person name="Banh J."/>
            <person name="Banno F."/>
            <person name="Bowser L."/>
            <person name="Brooks S.Y."/>
            <person name="Carninci P."/>
            <person name="Chao Q."/>
            <person name="Choy N."/>
            <person name="Enju A."/>
            <person name="Goldsmith A.D."/>
            <person name="Gurjal M."/>
            <person name="Hansen N.F."/>
            <person name="Hayashizaki Y."/>
            <person name="Johnson-Hopson C."/>
            <person name="Hsuan V.W."/>
            <person name="Iida K."/>
            <person name="Karnes M."/>
            <person name="Khan S."/>
            <person name="Koesema E."/>
            <person name="Ishida J."/>
            <person name="Jiang P.X."/>
            <person name="Jones T."/>
            <person name="Kawai J."/>
            <person name="Kamiya A."/>
            <person name="Meyers C."/>
            <person name="Nakajima M."/>
            <person name="Narusaka M."/>
            <person name="Seki M."/>
            <person name="Sakurai T."/>
            <person name="Satou M."/>
            <person name="Tamse R."/>
            <person name="Vaysberg M."/>
            <person name="Wallender E.K."/>
            <person name="Wong C."/>
            <person name="Yamamura Y."/>
            <person name="Yuan S."/>
            <person name="Shinozaki K."/>
            <person name="Davis R.W."/>
            <person name="Theologis A."/>
            <person name="Ecker J.R."/>
        </authorList>
    </citation>
    <scope>NUCLEOTIDE SEQUENCE [LARGE SCALE MRNA]</scope>
    <source>
        <strain>cv. Columbia</strain>
    </source>
</reference>
<reference key="6">
    <citation type="journal article" date="2010" name="Cell Host Microbe">
        <title>Receptor-like cytoplasmic kinases integrate signaling from multiple plant immune receptors and are targeted by a Pseudomonas syringae effector.</title>
        <authorList>
            <person name="Zhang J."/>
            <person name="Li W."/>
            <person name="Xiang T."/>
            <person name="Liu Z."/>
            <person name="Laluk K."/>
            <person name="Ding X."/>
            <person name="Zou Y."/>
            <person name="Gao M."/>
            <person name="Zhang X."/>
            <person name="Chen S."/>
            <person name="Mengiste T."/>
            <person name="Zhang Y."/>
            <person name="Zhou J.M."/>
        </authorList>
    </citation>
    <scope>GENE FAMILY</scope>
    <scope>NOMENCLATURE</scope>
</reference>
<reference key="7">
    <citation type="journal article" date="2011" name="FEBS Lett.">
        <title>Protein N-acylation overrides differing targeting signals.</title>
        <authorList>
            <person name="Stael S."/>
            <person name="Bayer R.G."/>
            <person name="Mehlmer N."/>
            <person name="Teige M."/>
        </authorList>
    </citation>
    <scope>SUBCELLULAR LOCATION</scope>
    <scope>MUTAGENESIS OF GLY-2</scope>
    <scope>MYRISTOYLATION AT GLY-2</scope>
</reference>
<reference key="8">
    <citation type="journal article" date="2013" name="PLoS ONE">
        <title>xopAC-triggered immunity against Xanthomonas depends on Arabidopsis receptor-like cytoplasmic kinase genes PBL2 and RIPK.</title>
        <authorList>
            <person name="Guy E."/>
            <person name="Lautier M."/>
            <person name="Chabannes M."/>
            <person name="Roux B."/>
            <person name="Lauber E."/>
            <person name="Arlat M."/>
            <person name="Noel L.D."/>
        </authorList>
    </citation>
    <scope>INTERACTION WITH XANTHOMONAS CAMPESTRIS XOPAC/AVRAC</scope>
</reference>
<gene>
    <name evidence="8" type="primary">PBL3</name>
    <name evidence="11" type="synonym">APK2B</name>
    <name evidence="9" type="synonym">KIN2</name>
    <name evidence="10" type="synonym">PIX14</name>
    <name type="ordered locus">At2g02800</name>
    <name type="ORF">T20F6.6</name>
</gene>
<proteinExistence type="evidence at protein level"/>
<evidence type="ECO:0000250" key="1">
    <source>
        <dbReference type="UniProtKB" id="O48814"/>
    </source>
</evidence>
<evidence type="ECO:0000250" key="2">
    <source>
        <dbReference type="UniProtKB" id="Q9FE20"/>
    </source>
</evidence>
<evidence type="ECO:0000255" key="3">
    <source>
        <dbReference type="PROSITE-ProRule" id="PRU00159"/>
    </source>
</evidence>
<evidence type="ECO:0000256" key="4">
    <source>
        <dbReference type="SAM" id="MobiDB-lite"/>
    </source>
</evidence>
<evidence type="ECO:0000269" key="5">
    <source>
    </source>
</evidence>
<evidence type="ECO:0000269" key="6">
    <source>
    </source>
</evidence>
<evidence type="ECO:0000269" key="7">
    <source>
    </source>
</evidence>
<evidence type="ECO:0000303" key="8">
    <source>
    </source>
</evidence>
<evidence type="ECO:0000303" key="9">
    <source>
    </source>
</evidence>
<evidence type="ECO:0000303" key="10">
    <source>
    </source>
</evidence>
<evidence type="ECO:0000303" key="11">
    <source>
    </source>
</evidence>
<evidence type="ECO:0000305" key="12"/>
<evidence type="ECO:0000305" key="13">
    <source>
    </source>
</evidence>
<name>PBL3_ARATH</name>
<keyword id="KW-0067">ATP-binding</keyword>
<keyword id="KW-1003">Cell membrane</keyword>
<keyword id="KW-0418">Kinase</keyword>
<keyword id="KW-0449">Lipoprotein</keyword>
<keyword id="KW-0472">Membrane</keyword>
<keyword id="KW-0519">Myristate</keyword>
<keyword id="KW-0547">Nucleotide-binding</keyword>
<keyword id="KW-0539">Nucleus</keyword>
<keyword id="KW-0564">Palmitate</keyword>
<keyword id="KW-0597">Phosphoprotein</keyword>
<keyword id="KW-0611">Plant defense</keyword>
<keyword id="KW-1185">Reference proteome</keyword>
<keyword id="KW-0723">Serine/threonine-protein kinase</keyword>
<keyword id="KW-0808">Transferase</keyword>
<sequence>MGNCLDSSAKVDSSSHSPHANSASLSSRVSSKTSRSTVPSSLSINSYSSVESLPTPRTEGEILSSPNLKAFTFNELKNATRNFRPDSLLGEGGFGYVFKGWIDGTTLTASKPGSGIVVAVKKLKTEGYQGHKEWLTEVNYLGQLSHPNLVKLVGYCVEGENRLLVYEFMPKGSLENHLFRRGAQPLTWAIRMKVAIGAAKGLTFLHDAKSQVIYRDFKAANILLDAEFNSKLSDFGLAKAGPTGDKTHVSTQVMGTHGYAAPEYVATGRLTAKSDVYSFGVVLLELLSGRRAVDKSKVGMEQSLVDWATPYLGDKRKLFRIMDTRLGGQYPQKGAYTAASLALQCLNPDAKLRPKMSEVLAKLDQLESTKPGTGVGNRQAQIDSPRGSNGSIVQKSPRRYSYDRPLLHITPGASPLPTHNHSPRVR</sequence>
<comment type="function">
    <text evidence="1">May be involved in plant defense signaling.</text>
</comment>
<comment type="catalytic activity">
    <reaction evidence="12">
        <text>L-seryl-[protein] + ATP = O-phospho-L-seryl-[protein] + ADP + H(+)</text>
        <dbReference type="Rhea" id="RHEA:17989"/>
        <dbReference type="Rhea" id="RHEA-COMP:9863"/>
        <dbReference type="Rhea" id="RHEA-COMP:11604"/>
        <dbReference type="ChEBI" id="CHEBI:15378"/>
        <dbReference type="ChEBI" id="CHEBI:29999"/>
        <dbReference type="ChEBI" id="CHEBI:30616"/>
        <dbReference type="ChEBI" id="CHEBI:83421"/>
        <dbReference type="ChEBI" id="CHEBI:456216"/>
        <dbReference type="EC" id="2.7.11.1"/>
    </reaction>
</comment>
<comment type="catalytic activity">
    <reaction evidence="12">
        <text>L-threonyl-[protein] + ATP = O-phospho-L-threonyl-[protein] + ADP + H(+)</text>
        <dbReference type="Rhea" id="RHEA:46608"/>
        <dbReference type="Rhea" id="RHEA-COMP:11060"/>
        <dbReference type="Rhea" id="RHEA-COMP:11605"/>
        <dbReference type="ChEBI" id="CHEBI:15378"/>
        <dbReference type="ChEBI" id="CHEBI:30013"/>
        <dbReference type="ChEBI" id="CHEBI:30616"/>
        <dbReference type="ChEBI" id="CHEBI:61977"/>
        <dbReference type="ChEBI" id="CHEBI:456216"/>
        <dbReference type="EC" id="2.7.11.1"/>
    </reaction>
</comment>
<comment type="subunit">
    <text evidence="6">Interacts with the Xanthomonas campestris effector XopAC/AvrAC.</text>
</comment>
<comment type="subcellular location">
    <subcellularLocation>
        <location evidence="5">Cell membrane</location>
        <topology evidence="13">Lipid-anchor</topology>
    </subcellularLocation>
    <subcellularLocation>
        <location evidence="5">Nucleus</location>
    </subcellularLocation>
    <text evidence="5">Predominantly localized at the plasma membrane.</text>
</comment>
<comment type="tissue specificity">
    <text evidence="7">Strongly expressed in leaves, moderately in flowers, and barely in roots.</text>
</comment>
<comment type="similarity">
    <text evidence="3">Belongs to the protein kinase superfamily. Ser/Thr protein kinase family.</text>
</comment>
<accession>O49840</accession>
<accession>Q8GYU1</accession>
<dbReference type="EC" id="2.7.11.1" evidence="12"/>
<dbReference type="EMBL" id="D88207">
    <property type="protein sequence ID" value="BAA24695.1"/>
    <property type="molecule type" value="mRNA"/>
</dbReference>
<dbReference type="EMBL" id="AC002521">
    <property type="protein sequence ID" value="AAC05342.1"/>
    <property type="molecule type" value="Genomic_DNA"/>
</dbReference>
<dbReference type="EMBL" id="CP002685">
    <property type="protein sequence ID" value="AEC05625.1"/>
    <property type="molecule type" value="Genomic_DNA"/>
</dbReference>
<dbReference type="EMBL" id="CP002685">
    <property type="protein sequence ID" value="AEC05626.1"/>
    <property type="molecule type" value="Genomic_DNA"/>
</dbReference>
<dbReference type="EMBL" id="AK117389">
    <property type="protein sequence ID" value="BAC42058.1"/>
    <property type="molecule type" value="mRNA"/>
</dbReference>
<dbReference type="EMBL" id="AF428432">
    <property type="protein sequence ID" value="AAL16201.1"/>
    <property type="molecule type" value="mRNA"/>
</dbReference>
<dbReference type="EMBL" id="AY125559">
    <property type="protein sequence ID" value="AAM78069.1"/>
    <property type="molecule type" value="mRNA"/>
</dbReference>
<dbReference type="PIR" id="T00848">
    <property type="entry name" value="T00848"/>
</dbReference>
<dbReference type="RefSeq" id="NP_178383.1">
    <property type="nucleotide sequence ID" value="NM_126335.6"/>
</dbReference>
<dbReference type="RefSeq" id="NP_973403.1">
    <property type="nucleotide sequence ID" value="NM_201674.2"/>
</dbReference>
<dbReference type="SMR" id="O49840"/>
<dbReference type="BioGRID" id="212">
    <property type="interactions" value="2"/>
</dbReference>
<dbReference type="FunCoup" id="O49840">
    <property type="interactions" value="3530"/>
</dbReference>
<dbReference type="IntAct" id="O49840">
    <property type="interactions" value="2"/>
</dbReference>
<dbReference type="STRING" id="3702.O49840"/>
<dbReference type="GlyGen" id="O49840">
    <property type="glycosylation" value="1 site"/>
</dbReference>
<dbReference type="iPTMnet" id="O49840"/>
<dbReference type="PaxDb" id="3702-AT2G02800.1"/>
<dbReference type="ProteomicsDB" id="236280"/>
<dbReference type="EnsemblPlants" id="AT2G02800.1">
    <property type="protein sequence ID" value="AT2G02800.1"/>
    <property type="gene ID" value="AT2G02800"/>
</dbReference>
<dbReference type="EnsemblPlants" id="AT2G02800.2">
    <property type="protein sequence ID" value="AT2G02800.2"/>
    <property type="gene ID" value="AT2G02800"/>
</dbReference>
<dbReference type="GeneID" id="814810"/>
<dbReference type="Gramene" id="AT2G02800.1">
    <property type="protein sequence ID" value="AT2G02800.1"/>
    <property type="gene ID" value="AT2G02800"/>
</dbReference>
<dbReference type="Gramene" id="AT2G02800.2">
    <property type="protein sequence ID" value="AT2G02800.2"/>
    <property type="gene ID" value="AT2G02800"/>
</dbReference>
<dbReference type="KEGG" id="ath:AT2G02800"/>
<dbReference type="Araport" id="AT2G02800"/>
<dbReference type="TAIR" id="AT2G02800">
    <property type="gene designation" value="APK2B"/>
</dbReference>
<dbReference type="eggNOG" id="KOG1187">
    <property type="taxonomic scope" value="Eukaryota"/>
</dbReference>
<dbReference type="HOGENOM" id="CLU_000288_21_1_1"/>
<dbReference type="InParanoid" id="O49840"/>
<dbReference type="OMA" id="KYNMASP"/>
<dbReference type="OrthoDB" id="4062651at2759"/>
<dbReference type="PhylomeDB" id="O49840"/>
<dbReference type="PRO" id="PR:O49840"/>
<dbReference type="Proteomes" id="UP000006548">
    <property type="component" value="Chromosome 2"/>
</dbReference>
<dbReference type="ExpressionAtlas" id="O49840">
    <property type="expression patterns" value="baseline and differential"/>
</dbReference>
<dbReference type="GO" id="GO:0005737">
    <property type="term" value="C:cytoplasm"/>
    <property type="evidence" value="ECO:0007005"/>
    <property type="project" value="TAIR"/>
</dbReference>
<dbReference type="GO" id="GO:0005634">
    <property type="term" value="C:nucleus"/>
    <property type="evidence" value="ECO:0007005"/>
    <property type="project" value="TAIR"/>
</dbReference>
<dbReference type="GO" id="GO:0005886">
    <property type="term" value="C:plasma membrane"/>
    <property type="evidence" value="ECO:0000314"/>
    <property type="project" value="TAIR"/>
</dbReference>
<dbReference type="GO" id="GO:0005524">
    <property type="term" value="F:ATP binding"/>
    <property type="evidence" value="ECO:0007669"/>
    <property type="project" value="UniProtKB-KW"/>
</dbReference>
<dbReference type="GO" id="GO:0106310">
    <property type="term" value="F:protein serine kinase activity"/>
    <property type="evidence" value="ECO:0007669"/>
    <property type="project" value="RHEA"/>
</dbReference>
<dbReference type="GO" id="GO:0004674">
    <property type="term" value="F:protein serine/threonine kinase activity"/>
    <property type="evidence" value="ECO:0007669"/>
    <property type="project" value="UniProtKB-KW"/>
</dbReference>
<dbReference type="GO" id="GO:0006952">
    <property type="term" value="P:defense response"/>
    <property type="evidence" value="ECO:0007669"/>
    <property type="project" value="UniProtKB-KW"/>
</dbReference>
<dbReference type="CDD" id="cd14066">
    <property type="entry name" value="STKc_IRAK"/>
    <property type="match status" value="1"/>
</dbReference>
<dbReference type="FunFam" id="1.10.510.10:FF:000258">
    <property type="entry name" value="Probable serine/threonine-protein kinase PBL8"/>
    <property type="match status" value="1"/>
</dbReference>
<dbReference type="FunFam" id="3.30.200.20:FF:000228">
    <property type="entry name" value="Serine/threonine-protein kinase BIK1"/>
    <property type="match status" value="1"/>
</dbReference>
<dbReference type="Gene3D" id="3.30.200.20">
    <property type="entry name" value="Phosphorylase Kinase, domain 1"/>
    <property type="match status" value="1"/>
</dbReference>
<dbReference type="Gene3D" id="1.10.510.10">
    <property type="entry name" value="Transferase(Phosphotransferase) domain 1"/>
    <property type="match status" value="1"/>
</dbReference>
<dbReference type="InterPro" id="IPR011009">
    <property type="entry name" value="Kinase-like_dom_sf"/>
</dbReference>
<dbReference type="InterPro" id="IPR050823">
    <property type="entry name" value="Plant_Ser_Thr_Prot_Kinase"/>
</dbReference>
<dbReference type="InterPro" id="IPR000719">
    <property type="entry name" value="Prot_kinase_dom"/>
</dbReference>
<dbReference type="InterPro" id="IPR017441">
    <property type="entry name" value="Protein_kinase_ATP_BS"/>
</dbReference>
<dbReference type="InterPro" id="IPR001245">
    <property type="entry name" value="Ser-Thr/Tyr_kinase_cat_dom"/>
</dbReference>
<dbReference type="InterPro" id="IPR008271">
    <property type="entry name" value="Ser/Thr_kinase_AS"/>
</dbReference>
<dbReference type="PANTHER" id="PTHR45621">
    <property type="entry name" value="OS01G0588500 PROTEIN-RELATED"/>
    <property type="match status" value="1"/>
</dbReference>
<dbReference type="Pfam" id="PF07714">
    <property type="entry name" value="PK_Tyr_Ser-Thr"/>
    <property type="match status" value="1"/>
</dbReference>
<dbReference type="SUPFAM" id="SSF56112">
    <property type="entry name" value="Protein kinase-like (PK-like)"/>
    <property type="match status" value="1"/>
</dbReference>
<dbReference type="PROSITE" id="PS00107">
    <property type="entry name" value="PROTEIN_KINASE_ATP"/>
    <property type="match status" value="1"/>
</dbReference>
<dbReference type="PROSITE" id="PS50011">
    <property type="entry name" value="PROTEIN_KINASE_DOM"/>
    <property type="match status" value="1"/>
</dbReference>
<dbReference type="PROSITE" id="PS00108">
    <property type="entry name" value="PROTEIN_KINASE_ST"/>
    <property type="match status" value="1"/>
</dbReference>
<organism>
    <name type="scientific">Arabidopsis thaliana</name>
    <name type="common">Mouse-ear cress</name>
    <dbReference type="NCBI Taxonomy" id="3702"/>
    <lineage>
        <taxon>Eukaryota</taxon>
        <taxon>Viridiplantae</taxon>
        <taxon>Streptophyta</taxon>
        <taxon>Embryophyta</taxon>
        <taxon>Tracheophyta</taxon>
        <taxon>Spermatophyta</taxon>
        <taxon>Magnoliopsida</taxon>
        <taxon>eudicotyledons</taxon>
        <taxon>Gunneridae</taxon>
        <taxon>Pentapetalae</taxon>
        <taxon>rosids</taxon>
        <taxon>malvids</taxon>
        <taxon>Brassicales</taxon>
        <taxon>Brassicaceae</taxon>
        <taxon>Camelineae</taxon>
        <taxon>Arabidopsis</taxon>
    </lineage>
</organism>